<sequence>SLEDIEHEVEELLR</sequence>
<name>LV1_SCHML</name>
<reference evidence="1" key="1">
    <citation type="submission" date="2012-12" db="UniProtKB">
        <authorList>
            <person name="Cunningham M.L."/>
            <person name="Laino A."/>
            <person name="Garcia C.F."/>
        </authorList>
    </citation>
    <scope>PROTEIN SEQUENCE</scope>
    <scope>POTENTIAL FUNCTION</scope>
    <source>
        <tissue>Egg</tissue>
    </source>
</reference>
<feature type="peptide" id="PRO_0000421719" description="Lipovitellin-1">
    <location>
        <begin position="1"/>
        <end position="14"/>
    </location>
</feature>
<feature type="non-terminal residue">
    <location>
        <position position="14"/>
    </location>
</feature>
<keyword id="KW-0903">Direct protein sequencing</keyword>
<comment type="function">
    <text evidence="1">Egg-yolk protein that is a source of nutrients during embryonic development.</text>
</comment>
<organism>
    <name type="scientific">Schizocosa malitiosa</name>
    <name type="common">Wolf spider</name>
    <name type="synonym">Lycosa malitiosa</name>
    <dbReference type="NCBI Taxonomy" id="1274933"/>
    <lineage>
        <taxon>Eukaryota</taxon>
        <taxon>Metazoa</taxon>
        <taxon>Ecdysozoa</taxon>
        <taxon>Arthropoda</taxon>
        <taxon>Chelicerata</taxon>
        <taxon>Arachnida</taxon>
        <taxon>Araneae</taxon>
        <taxon>Araneomorphae</taxon>
        <taxon>Entelegynae</taxon>
        <taxon>Lycosoidea</taxon>
        <taxon>Lycosidae</taxon>
        <taxon>Schizocosa</taxon>
    </lineage>
</organism>
<protein>
    <recommendedName>
        <fullName>Lipovitellin-1</fullName>
        <shortName>SmLV1</shortName>
    </recommendedName>
</protein>
<accession>C0HJA5</accession>
<proteinExistence type="evidence at protein level"/>
<evidence type="ECO:0000305" key="1"/>